<organism>
    <name type="scientific">Pongo abelii</name>
    <name type="common">Sumatran orangutan</name>
    <name type="synonym">Pongo pygmaeus abelii</name>
    <dbReference type="NCBI Taxonomy" id="9601"/>
    <lineage>
        <taxon>Eukaryota</taxon>
        <taxon>Metazoa</taxon>
        <taxon>Chordata</taxon>
        <taxon>Craniata</taxon>
        <taxon>Vertebrata</taxon>
        <taxon>Euteleostomi</taxon>
        <taxon>Mammalia</taxon>
        <taxon>Eutheria</taxon>
        <taxon>Euarchontoglires</taxon>
        <taxon>Primates</taxon>
        <taxon>Haplorrhini</taxon>
        <taxon>Catarrhini</taxon>
        <taxon>Hominidae</taxon>
        <taxon>Pongo</taxon>
    </lineage>
</organism>
<gene>
    <name type="primary">AARS1</name>
    <name evidence="2" type="synonym">AARS</name>
</gene>
<proteinExistence type="evidence at transcript level"/>
<reference key="1">
    <citation type="submission" date="2004-11" db="EMBL/GenBank/DDBJ databases">
        <authorList>
            <consortium name="The German cDNA consortium"/>
        </authorList>
    </citation>
    <scope>NUCLEOTIDE SEQUENCE [LARGE SCALE MRNA]</scope>
    <source>
        <tissue>Brain cortex</tissue>
    </source>
</reference>
<feature type="chain" id="PRO_0000075283" description="Alanine--tRNA ligase, cytoplasmic">
    <location>
        <begin position="1"/>
        <end position="968"/>
    </location>
</feature>
<feature type="short sequence motif" description="Nuclear localization signal" evidence="2">
    <location>
        <begin position="750"/>
        <end position="763"/>
    </location>
</feature>
<feature type="binding site" evidence="1">
    <location>
        <position position="77"/>
    </location>
    <ligand>
        <name>ATP</name>
        <dbReference type="ChEBI" id="CHEBI:30616"/>
    </ligand>
</feature>
<feature type="binding site" evidence="1">
    <location>
        <position position="95"/>
    </location>
    <ligand>
        <name>ATP</name>
        <dbReference type="ChEBI" id="CHEBI:30616"/>
    </ligand>
</feature>
<feature type="binding site" evidence="1">
    <location>
        <position position="176"/>
    </location>
    <ligand>
        <name>ATP</name>
        <dbReference type="ChEBI" id="CHEBI:30616"/>
    </ligand>
</feature>
<feature type="binding site" evidence="1">
    <location>
        <begin position="214"/>
        <end position="216"/>
    </location>
    <ligand>
        <name>ATP</name>
        <dbReference type="ChEBI" id="CHEBI:30616"/>
    </ligand>
</feature>
<feature type="binding site" evidence="1">
    <location>
        <position position="216"/>
    </location>
    <ligand>
        <name>L-alanine</name>
        <dbReference type="ChEBI" id="CHEBI:57972"/>
    </ligand>
</feature>
<feature type="binding site" evidence="1">
    <location>
        <position position="239"/>
    </location>
    <ligand>
        <name>L-alanine</name>
        <dbReference type="ChEBI" id="CHEBI:57972"/>
    </ligand>
</feature>
<feature type="binding site" evidence="1">
    <location>
        <position position="243"/>
    </location>
    <ligand>
        <name>ATP</name>
        <dbReference type="ChEBI" id="CHEBI:30616"/>
    </ligand>
</feature>
<feature type="binding site" evidence="2">
    <location>
        <position position="605"/>
    </location>
    <ligand>
        <name>Zn(2+)</name>
        <dbReference type="ChEBI" id="CHEBI:29105"/>
    </ligand>
</feature>
<feature type="binding site" evidence="2">
    <location>
        <position position="609"/>
    </location>
    <ligand>
        <name>Zn(2+)</name>
        <dbReference type="ChEBI" id="CHEBI:29105"/>
    </ligand>
</feature>
<feature type="binding site" evidence="2">
    <location>
        <position position="723"/>
    </location>
    <ligand>
        <name>Zn(2+)</name>
        <dbReference type="ChEBI" id="CHEBI:29105"/>
    </ligand>
</feature>
<feature type="binding site" evidence="2">
    <location>
        <position position="727"/>
    </location>
    <ligand>
        <name>Zn(2+)</name>
        <dbReference type="ChEBI" id="CHEBI:29105"/>
    </ligand>
</feature>
<feature type="modified residue" description="N-acetylmethionine" evidence="1 2">
    <location>
        <position position="1"/>
    </location>
</feature>
<feature type="modified residue" description="Phosphoserine" evidence="1">
    <location>
        <position position="3"/>
    </location>
</feature>
<feature type="modified residue" description="Phosphoserine" evidence="1">
    <location>
        <position position="8"/>
    </location>
</feature>
<feature type="modified residue" description="N6-acetyllysine" evidence="1">
    <location>
        <position position="19"/>
    </location>
</feature>
<feature type="modified residue" description="Phosphoserine" evidence="1">
    <location>
        <position position="399"/>
    </location>
</feature>
<feature type="modified residue" description="Phosphoserine" evidence="1">
    <location>
        <position position="555"/>
    </location>
</feature>
<feature type="modified residue" description="N6-acetyllysine" evidence="1">
    <location>
        <position position="876"/>
    </location>
</feature>
<feature type="modified residue" description="N6,N6,N6-trimethyllysine; alternate" evidence="1">
    <location>
        <position position="943"/>
    </location>
</feature>
<feature type="modified residue" description="N6,N6-dimethyllysine; alternate" evidence="1">
    <location>
        <position position="943"/>
    </location>
</feature>
<feature type="modified residue" description="N6-methyllysine; alternate" evidence="1">
    <location>
        <position position="943"/>
    </location>
</feature>
<dbReference type="EC" id="6.1.1.7" evidence="2"/>
<dbReference type="EC" id="6.-.-.-" evidence="2"/>
<dbReference type="EMBL" id="CR858480">
    <property type="protein sequence ID" value="CAH90708.1"/>
    <property type="molecule type" value="mRNA"/>
</dbReference>
<dbReference type="RefSeq" id="NP_001125391.1">
    <property type="nucleotide sequence ID" value="NM_001131919.1"/>
</dbReference>
<dbReference type="SMR" id="Q5RC02"/>
<dbReference type="FunCoup" id="Q5RC02">
    <property type="interactions" value="2439"/>
</dbReference>
<dbReference type="STRING" id="9601.ENSPPYP00000008517"/>
<dbReference type="GeneID" id="100172296"/>
<dbReference type="KEGG" id="pon:100172296"/>
<dbReference type="CTD" id="16"/>
<dbReference type="InParanoid" id="Q5RC02"/>
<dbReference type="OrthoDB" id="2423964at2759"/>
<dbReference type="Proteomes" id="UP000001595">
    <property type="component" value="Unplaced"/>
</dbReference>
<dbReference type="GO" id="GO:0005737">
    <property type="term" value="C:cytoplasm"/>
    <property type="evidence" value="ECO:0000250"/>
    <property type="project" value="UniProtKB"/>
</dbReference>
<dbReference type="GO" id="GO:0005739">
    <property type="term" value="C:mitochondrion"/>
    <property type="evidence" value="ECO:0007669"/>
    <property type="project" value="TreeGrafter"/>
</dbReference>
<dbReference type="GO" id="GO:0005634">
    <property type="term" value="C:nucleus"/>
    <property type="evidence" value="ECO:0000250"/>
    <property type="project" value="UniProtKB"/>
</dbReference>
<dbReference type="GO" id="GO:0004813">
    <property type="term" value="F:alanine-tRNA ligase activity"/>
    <property type="evidence" value="ECO:0000250"/>
    <property type="project" value="UniProtKB"/>
</dbReference>
<dbReference type="GO" id="GO:0002161">
    <property type="term" value="F:aminoacyl-tRNA deacylase activity"/>
    <property type="evidence" value="ECO:0000250"/>
    <property type="project" value="UniProtKB"/>
</dbReference>
<dbReference type="GO" id="GO:0005524">
    <property type="term" value="F:ATP binding"/>
    <property type="evidence" value="ECO:0007669"/>
    <property type="project" value="UniProtKB-UniRule"/>
</dbReference>
<dbReference type="GO" id="GO:0141207">
    <property type="term" value="F:peptide lactyltransferase (ATP-dependent) activity"/>
    <property type="evidence" value="ECO:0000250"/>
    <property type="project" value="UniProtKB"/>
</dbReference>
<dbReference type="GO" id="GO:0002196">
    <property type="term" value="F:Ser-tRNA(Ala) deacylase activity"/>
    <property type="evidence" value="ECO:0000250"/>
    <property type="project" value="UniProtKB"/>
</dbReference>
<dbReference type="GO" id="GO:0000049">
    <property type="term" value="F:tRNA binding"/>
    <property type="evidence" value="ECO:0007669"/>
    <property type="project" value="UniProtKB-KW"/>
</dbReference>
<dbReference type="GO" id="GO:0008270">
    <property type="term" value="F:zinc ion binding"/>
    <property type="evidence" value="ECO:0007669"/>
    <property type="project" value="UniProtKB-UniRule"/>
</dbReference>
<dbReference type="GO" id="GO:0006419">
    <property type="term" value="P:alanyl-tRNA aminoacylation"/>
    <property type="evidence" value="ECO:0000250"/>
    <property type="project" value="UniProtKB"/>
</dbReference>
<dbReference type="GO" id="GO:1901797">
    <property type="term" value="P:negative regulation of signal transduction by p53 class mediator"/>
    <property type="evidence" value="ECO:0000250"/>
    <property type="project" value="UniProtKB"/>
</dbReference>
<dbReference type="GO" id="GO:0035332">
    <property type="term" value="P:positive regulation of hippo signaling"/>
    <property type="evidence" value="ECO:0000250"/>
    <property type="project" value="UniProtKB"/>
</dbReference>
<dbReference type="GO" id="GO:0006400">
    <property type="term" value="P:tRNA modification"/>
    <property type="evidence" value="ECO:0000250"/>
    <property type="project" value="UniProtKB"/>
</dbReference>
<dbReference type="CDD" id="cd00673">
    <property type="entry name" value="AlaRS_core"/>
    <property type="match status" value="1"/>
</dbReference>
<dbReference type="FunFam" id="3.30.930.10:FF:000011">
    <property type="entry name" value="Alanine--tRNA ligase, cytoplasmic"/>
    <property type="match status" value="1"/>
</dbReference>
<dbReference type="FunFam" id="3.30.980.10:FF:000004">
    <property type="entry name" value="Alanine--tRNA ligase, cytoplasmic"/>
    <property type="match status" value="1"/>
</dbReference>
<dbReference type="FunFam" id="3.10.310.40:FF:000002">
    <property type="entry name" value="alanine--tRNA ligase, cytoplasmic"/>
    <property type="match status" value="1"/>
</dbReference>
<dbReference type="FunFam" id="2.40.30.130:FF:000026">
    <property type="entry name" value="Alanyl-tRNA synthetase"/>
    <property type="match status" value="1"/>
</dbReference>
<dbReference type="Gene3D" id="2.40.30.130">
    <property type="match status" value="1"/>
</dbReference>
<dbReference type="Gene3D" id="3.10.310.40">
    <property type="match status" value="1"/>
</dbReference>
<dbReference type="Gene3D" id="3.30.930.10">
    <property type="entry name" value="Bira Bifunctional Protein, Domain 2"/>
    <property type="match status" value="1"/>
</dbReference>
<dbReference type="Gene3D" id="3.30.980.10">
    <property type="entry name" value="Threonyl-trna Synthetase, Chain A, domain 2"/>
    <property type="match status" value="1"/>
</dbReference>
<dbReference type="HAMAP" id="MF_00036_B">
    <property type="entry name" value="Ala_tRNA_synth_B"/>
    <property type="match status" value="1"/>
</dbReference>
<dbReference type="InterPro" id="IPR045864">
    <property type="entry name" value="aa-tRNA-synth_II/BPL/LPL"/>
</dbReference>
<dbReference type="InterPro" id="IPR002318">
    <property type="entry name" value="Ala-tRNA-lgiase_IIc"/>
</dbReference>
<dbReference type="InterPro" id="IPR018162">
    <property type="entry name" value="Ala-tRNA-ligase_IIc_anticod-bd"/>
</dbReference>
<dbReference type="InterPro" id="IPR018165">
    <property type="entry name" value="Ala-tRNA-synth_IIc_core"/>
</dbReference>
<dbReference type="InterPro" id="IPR018164">
    <property type="entry name" value="Ala-tRNA-synth_IIc_N"/>
</dbReference>
<dbReference type="InterPro" id="IPR050058">
    <property type="entry name" value="Ala-tRNA_ligase"/>
</dbReference>
<dbReference type="InterPro" id="IPR023033">
    <property type="entry name" value="Ala_tRNA_ligase_euk/bac"/>
</dbReference>
<dbReference type="InterPro" id="IPR003156">
    <property type="entry name" value="DHHA1_dom"/>
</dbReference>
<dbReference type="InterPro" id="IPR018163">
    <property type="entry name" value="Thr/Ala-tRNA-synth_IIc_edit"/>
</dbReference>
<dbReference type="InterPro" id="IPR009000">
    <property type="entry name" value="Transl_B-barrel_sf"/>
</dbReference>
<dbReference type="InterPro" id="IPR012947">
    <property type="entry name" value="tRNA_SAD"/>
</dbReference>
<dbReference type="NCBIfam" id="TIGR00344">
    <property type="entry name" value="alaS"/>
    <property type="match status" value="1"/>
</dbReference>
<dbReference type="PANTHER" id="PTHR11777:SF36">
    <property type="entry name" value="ALANINE--TRNA LIGASE, CYTOPLASMIC"/>
    <property type="match status" value="1"/>
</dbReference>
<dbReference type="PANTHER" id="PTHR11777">
    <property type="entry name" value="ALANYL-TRNA SYNTHETASE"/>
    <property type="match status" value="1"/>
</dbReference>
<dbReference type="Pfam" id="PF02272">
    <property type="entry name" value="DHHA1"/>
    <property type="match status" value="1"/>
</dbReference>
<dbReference type="Pfam" id="PF01411">
    <property type="entry name" value="tRNA-synt_2c"/>
    <property type="match status" value="1"/>
</dbReference>
<dbReference type="Pfam" id="PF07973">
    <property type="entry name" value="tRNA_SAD"/>
    <property type="match status" value="1"/>
</dbReference>
<dbReference type="PRINTS" id="PR00980">
    <property type="entry name" value="TRNASYNTHALA"/>
</dbReference>
<dbReference type="SMART" id="SM00863">
    <property type="entry name" value="tRNA_SAD"/>
    <property type="match status" value="1"/>
</dbReference>
<dbReference type="SUPFAM" id="SSF55681">
    <property type="entry name" value="Class II aaRS and biotin synthetases"/>
    <property type="match status" value="1"/>
</dbReference>
<dbReference type="SUPFAM" id="SSF101353">
    <property type="entry name" value="Putative anticodon-binding domain of alanyl-tRNA synthetase (AlaRS)"/>
    <property type="match status" value="1"/>
</dbReference>
<dbReference type="SUPFAM" id="SSF55186">
    <property type="entry name" value="ThrRS/AlaRS common domain"/>
    <property type="match status" value="1"/>
</dbReference>
<dbReference type="SUPFAM" id="SSF50447">
    <property type="entry name" value="Translation proteins"/>
    <property type="match status" value="1"/>
</dbReference>
<dbReference type="PROSITE" id="PS50860">
    <property type="entry name" value="AA_TRNA_LIGASE_II_ALA"/>
    <property type="match status" value="1"/>
</dbReference>
<comment type="function">
    <text evidence="2">Catalyzes the attachment of alanine to tRNA(Ala) in a two-step reaction: alanine is first activated by ATP to form Ala-AMP and then transferred to the acceptor end of tRNA(Ala). Also edits incorrectly charged tRNA(Ala) via its editing domain. In presence of high levels of lactate, also acts as a protein lactyltransferase that mediates lactylation of lysine residues in target proteins, such as TEAD1, TP53/p53 and YAP1. Protein lactylation takes place in a two-step reaction: lactate is first activated by ATP to form lactate-AMP and then transferred to lysine residues of target proteins. Acts as an inhibitor of TP53/p53 activity by catalyzing lactylation of TP53/p53. Acts as a positive regulator of the Hippo pathway by mediating lactylation of TEAD1 and YAP1.</text>
</comment>
<comment type="catalytic activity">
    <reaction evidence="2">
        <text>tRNA(Ala) + L-alanine + ATP = L-alanyl-tRNA(Ala) + AMP + diphosphate</text>
        <dbReference type="Rhea" id="RHEA:12540"/>
        <dbReference type="Rhea" id="RHEA-COMP:9657"/>
        <dbReference type="Rhea" id="RHEA-COMP:9923"/>
        <dbReference type="ChEBI" id="CHEBI:30616"/>
        <dbReference type="ChEBI" id="CHEBI:33019"/>
        <dbReference type="ChEBI" id="CHEBI:57972"/>
        <dbReference type="ChEBI" id="CHEBI:78442"/>
        <dbReference type="ChEBI" id="CHEBI:78497"/>
        <dbReference type="ChEBI" id="CHEBI:456215"/>
        <dbReference type="EC" id="6.1.1.7"/>
    </reaction>
</comment>
<comment type="catalytic activity">
    <reaction evidence="2">
        <text>(S)-lactate + ATP + H(+) = (S)-lactoyl-AMP + diphosphate</text>
        <dbReference type="Rhea" id="RHEA:80271"/>
        <dbReference type="ChEBI" id="CHEBI:15378"/>
        <dbReference type="ChEBI" id="CHEBI:16651"/>
        <dbReference type="ChEBI" id="CHEBI:30616"/>
        <dbReference type="ChEBI" id="CHEBI:33019"/>
        <dbReference type="ChEBI" id="CHEBI:231470"/>
    </reaction>
</comment>
<comment type="catalytic activity">
    <reaction evidence="2">
        <text>(S)-lactoyl-AMP + L-lysyl-[protein] = N(6)-[(S)-lactoyl]-L-lysyl-[protein] + AMP + 2 H(+)</text>
        <dbReference type="Rhea" id="RHEA:80275"/>
        <dbReference type="Rhea" id="RHEA-COMP:9752"/>
        <dbReference type="Rhea" id="RHEA-COMP:19466"/>
        <dbReference type="ChEBI" id="CHEBI:15378"/>
        <dbReference type="ChEBI" id="CHEBI:29969"/>
        <dbReference type="ChEBI" id="CHEBI:231470"/>
        <dbReference type="ChEBI" id="CHEBI:231527"/>
        <dbReference type="ChEBI" id="CHEBI:456215"/>
    </reaction>
</comment>
<comment type="cofactor">
    <cofactor evidence="2">
        <name>Zn(2+)</name>
        <dbReference type="ChEBI" id="CHEBI:29105"/>
    </cofactor>
    <text evidence="2">Binds 1 zinc ion per subunit.</text>
</comment>
<comment type="activity regulation">
    <text evidence="1">The protein lactyltransferase activity is inhibited by beta-alanine.</text>
</comment>
<comment type="subunit">
    <text evidence="2">Monomer. Interacts with ANKRD16; the interaction is direct.</text>
</comment>
<comment type="subcellular location">
    <subcellularLocation>
        <location evidence="2">Cytoplasm</location>
    </subcellularLocation>
    <subcellularLocation>
        <location evidence="2">Nucleus</location>
    </subcellularLocation>
    <text evidence="2">Translocates to the nucleus in response to increased levels of lactate; nuclear translocation is dependent on KPNA4.</text>
</comment>
<comment type="domain">
    <text evidence="2">Consists of three domains; the N-terminal catalytic domain, the editing domain and the C-terminal C-Ala domain. The editing domain removes incorrectly charged amino acids, while the C-Ala domain, along with tRNA(Ala), serves as a bridge to cooperatively bring together the editing and aminoacylation centers thus stimulating deacylation of misacylated tRNAs.</text>
</comment>
<comment type="PTM">
    <text evidence="2">ISGylated.</text>
</comment>
<comment type="PTM">
    <text evidence="1">Methylation at 'Lys-943' by METTL21C.</text>
</comment>
<comment type="similarity">
    <text evidence="2">Belongs to the class-II aminoacyl-tRNA synthetase family.</text>
</comment>
<keyword id="KW-0007">Acetylation</keyword>
<keyword id="KW-0030">Aminoacyl-tRNA synthetase</keyword>
<keyword id="KW-0067">ATP-binding</keyword>
<keyword id="KW-0963">Cytoplasm</keyword>
<keyword id="KW-0436">Ligase</keyword>
<keyword id="KW-0479">Metal-binding</keyword>
<keyword id="KW-0488">Methylation</keyword>
<keyword id="KW-0547">Nucleotide-binding</keyword>
<keyword id="KW-0539">Nucleus</keyword>
<keyword id="KW-0597">Phosphoprotein</keyword>
<keyword id="KW-0648">Protein biosynthesis</keyword>
<keyword id="KW-1185">Reference proteome</keyword>
<keyword id="KW-0694">RNA-binding</keyword>
<keyword id="KW-0820">tRNA-binding</keyword>
<keyword id="KW-0832">Ubl conjugation</keyword>
<keyword id="KW-0862">Zinc</keyword>
<sequence>MDSTLTASKIRQRFIDFFKRNEHTYIHSSATIPLDDPTLLFANAGMNQFKPIFLNTIDPSHPMAKPSRAANTQKCIRAGGKHNDLDDVGKDVYHHTFFEMLGSWSFGDYFKELACKMALELLTQEFGIPIERLYVTYFGGDEAAGLEPDLECKQIWQNLGLDDTKILPGNMKDNFWEMGDTGPCGPCSEIHYDRIGGRDAAHLVNQDDPNVLEIWNLVFIQYNREADGILKPLPKKSIDTGMGLERLVSVLQNKMSNYDTDLFVPYFEAIQKGTGARPYTGKVGAEDADGIDMAYRVLADHARTITVALADGGRPDNTGRGYVLRRILRRAVRYAHEKLNASRGFFATLVDVVVQSLGDAFPELKKDPDMVKDIINEEEVQFLKTLSRGRRILDRKIQSLGDSKTIPGDTAWLLYDTYGFPVDLTGLIAEEKGLVVDMDGFEEERKLAQLKSQGKGAGGEDLIMLDIYAIEELRARDLEVTDDSPKYNYHLDSSGSYVFENTVATVMALRREKMFVEEVSTGQECGVVLDKTCFYAEQGGQIYDEGYLVKVDDSSEDKTEFTVKNAQVRGGYVLHIGTIYGDLKVGDQVWLFIDEPRRRPIMSNHTATHILNFALRSVLGEADQKGSLVAPDRLRFDFTAKGAMSTQQIKKAEEIANEMIEAAKPVYTQDCSLAAAKAIQGLRAVFDETYPDPVRVVSIGVPVSELLDDPSGPAGSLTSVEFCGGTHLRNSSHAGAFVIVTEEAIAKGIRRIVAVTGAEAQKALRKAGSLKKPLSVMEAKVKAQTAPNKDVQREIADLGEALATAVIPQWQKDELRETLKSLKKVMDDLDRASKADVQKRVLEKTKQLIDSNPNQPLVILEMESGASAKALNEALKLFKMHSPQTAAMLFTVDNEAGKITCLCQVPQNAANRGLKASEWVQQVSGLMDGKGGGKDVSAQATGKNVGCLQEALQLATSFAQLRLGDVKN</sequence>
<protein>
    <recommendedName>
        <fullName evidence="2">Alanine--tRNA ligase, cytoplasmic</fullName>
        <ecNumber evidence="2">6.1.1.7</ecNumber>
    </recommendedName>
    <alternativeName>
        <fullName evidence="2">Alanyl-tRNA synthetase</fullName>
        <shortName evidence="2">AlaRS</shortName>
    </alternativeName>
    <alternativeName>
        <fullName evidence="3">Protein lactyltransferase AARS1</fullName>
        <ecNumber evidence="2">6.-.-.-</ecNumber>
    </alternativeName>
</protein>
<name>SYAC_PONAB</name>
<accession>Q5RC02</accession>
<evidence type="ECO:0000250" key="1">
    <source>
        <dbReference type="UniProtKB" id="P49588"/>
    </source>
</evidence>
<evidence type="ECO:0000255" key="2">
    <source>
        <dbReference type="HAMAP-Rule" id="MF_03133"/>
    </source>
</evidence>
<evidence type="ECO:0000305" key="3"/>